<accession>B9MM31</accession>
<evidence type="ECO:0000255" key="1">
    <source>
        <dbReference type="HAMAP-Rule" id="MF_00248"/>
    </source>
</evidence>
<protein>
    <recommendedName>
        <fullName evidence="1">ATP-dependent protease subunit HslV</fullName>
        <ecNumber evidence="1">3.4.25.2</ecNumber>
    </recommendedName>
</protein>
<proteinExistence type="inferred from homology"/>
<sequence length="176" mass="18825">MFHATTIVAVKKGESVAIAGDGQVTFSQNMIMKSTAKKVRKLYNGKVLVGFAGSVADAITLCEKFEEKLEQNSGNLQKSVVELAKEWRQDKVLRRLEALMVVADKDHLFVVSGSGEVVEPDDNIAAIGSGGPYALAAARALLQSTDLSAAEIARKALEIAASICVYTNNNITVLEL</sequence>
<gene>
    <name evidence="1" type="primary">hslV</name>
    <name type="ordered locus">Athe_2179</name>
</gene>
<feature type="chain" id="PRO_1000192664" description="ATP-dependent protease subunit HslV">
    <location>
        <begin position="1"/>
        <end position="176"/>
    </location>
</feature>
<feature type="active site" evidence="1">
    <location>
        <position position="5"/>
    </location>
</feature>
<feature type="binding site" evidence="1">
    <location>
        <position position="161"/>
    </location>
    <ligand>
        <name>Na(+)</name>
        <dbReference type="ChEBI" id="CHEBI:29101"/>
    </ligand>
</feature>
<feature type="binding site" evidence="1">
    <location>
        <position position="164"/>
    </location>
    <ligand>
        <name>Na(+)</name>
        <dbReference type="ChEBI" id="CHEBI:29101"/>
    </ligand>
</feature>
<feature type="binding site" evidence="1">
    <location>
        <position position="167"/>
    </location>
    <ligand>
        <name>Na(+)</name>
        <dbReference type="ChEBI" id="CHEBI:29101"/>
    </ligand>
</feature>
<dbReference type="EC" id="3.4.25.2" evidence="1"/>
<dbReference type="EMBL" id="CP001393">
    <property type="protein sequence ID" value="ACM61254.1"/>
    <property type="molecule type" value="Genomic_DNA"/>
</dbReference>
<dbReference type="RefSeq" id="WP_015908516.1">
    <property type="nucleotide sequence ID" value="NC_012034.1"/>
</dbReference>
<dbReference type="SMR" id="B9MM31"/>
<dbReference type="STRING" id="521460.Athe_2179"/>
<dbReference type="MEROPS" id="T01.007"/>
<dbReference type="GeneID" id="31773528"/>
<dbReference type="KEGG" id="ate:Athe_2179"/>
<dbReference type="eggNOG" id="COG5405">
    <property type="taxonomic scope" value="Bacteria"/>
</dbReference>
<dbReference type="HOGENOM" id="CLU_093872_1_1_9"/>
<dbReference type="Proteomes" id="UP000007723">
    <property type="component" value="Chromosome"/>
</dbReference>
<dbReference type="GO" id="GO:0009376">
    <property type="term" value="C:HslUV protease complex"/>
    <property type="evidence" value="ECO:0007669"/>
    <property type="project" value="UniProtKB-UniRule"/>
</dbReference>
<dbReference type="GO" id="GO:0005839">
    <property type="term" value="C:proteasome core complex"/>
    <property type="evidence" value="ECO:0007669"/>
    <property type="project" value="InterPro"/>
</dbReference>
<dbReference type="GO" id="GO:0046872">
    <property type="term" value="F:metal ion binding"/>
    <property type="evidence" value="ECO:0007669"/>
    <property type="project" value="UniProtKB-KW"/>
</dbReference>
<dbReference type="GO" id="GO:0004298">
    <property type="term" value="F:threonine-type endopeptidase activity"/>
    <property type="evidence" value="ECO:0007669"/>
    <property type="project" value="UniProtKB-KW"/>
</dbReference>
<dbReference type="GO" id="GO:0051603">
    <property type="term" value="P:proteolysis involved in protein catabolic process"/>
    <property type="evidence" value="ECO:0007669"/>
    <property type="project" value="InterPro"/>
</dbReference>
<dbReference type="CDD" id="cd01913">
    <property type="entry name" value="protease_HslV"/>
    <property type="match status" value="1"/>
</dbReference>
<dbReference type="Gene3D" id="3.60.20.10">
    <property type="entry name" value="Glutamine Phosphoribosylpyrophosphate, subunit 1, domain 1"/>
    <property type="match status" value="1"/>
</dbReference>
<dbReference type="HAMAP" id="MF_00248">
    <property type="entry name" value="HslV"/>
    <property type="match status" value="1"/>
</dbReference>
<dbReference type="InterPro" id="IPR022281">
    <property type="entry name" value="ATP-dep_Prtase_HsIV_su"/>
</dbReference>
<dbReference type="InterPro" id="IPR029055">
    <property type="entry name" value="Ntn_hydrolases_N"/>
</dbReference>
<dbReference type="InterPro" id="IPR001353">
    <property type="entry name" value="Proteasome_sua/b"/>
</dbReference>
<dbReference type="InterPro" id="IPR023333">
    <property type="entry name" value="Proteasome_suB-type"/>
</dbReference>
<dbReference type="NCBIfam" id="TIGR03692">
    <property type="entry name" value="ATP_dep_HslV"/>
    <property type="match status" value="1"/>
</dbReference>
<dbReference type="NCBIfam" id="NF003964">
    <property type="entry name" value="PRK05456.1"/>
    <property type="match status" value="1"/>
</dbReference>
<dbReference type="PANTHER" id="PTHR32194:SF0">
    <property type="entry name" value="ATP-DEPENDENT PROTEASE SUBUNIT HSLV"/>
    <property type="match status" value="1"/>
</dbReference>
<dbReference type="PANTHER" id="PTHR32194">
    <property type="entry name" value="METALLOPROTEASE TLDD"/>
    <property type="match status" value="1"/>
</dbReference>
<dbReference type="Pfam" id="PF00227">
    <property type="entry name" value="Proteasome"/>
    <property type="match status" value="1"/>
</dbReference>
<dbReference type="PIRSF" id="PIRSF039093">
    <property type="entry name" value="HslV"/>
    <property type="match status" value="1"/>
</dbReference>
<dbReference type="SUPFAM" id="SSF56235">
    <property type="entry name" value="N-terminal nucleophile aminohydrolases (Ntn hydrolases)"/>
    <property type="match status" value="1"/>
</dbReference>
<dbReference type="PROSITE" id="PS51476">
    <property type="entry name" value="PROTEASOME_BETA_2"/>
    <property type="match status" value="1"/>
</dbReference>
<organism>
    <name type="scientific">Caldicellulosiruptor bescii (strain ATCC BAA-1888 / DSM 6725 / KCTC 15123 / Z-1320)</name>
    <name type="common">Anaerocellum thermophilum</name>
    <dbReference type="NCBI Taxonomy" id="521460"/>
    <lineage>
        <taxon>Bacteria</taxon>
        <taxon>Bacillati</taxon>
        <taxon>Bacillota</taxon>
        <taxon>Bacillota incertae sedis</taxon>
        <taxon>Caldicellulosiruptorales</taxon>
        <taxon>Caldicellulosiruptoraceae</taxon>
        <taxon>Caldicellulosiruptor</taxon>
    </lineage>
</organism>
<keyword id="KW-0021">Allosteric enzyme</keyword>
<keyword id="KW-0963">Cytoplasm</keyword>
<keyword id="KW-0378">Hydrolase</keyword>
<keyword id="KW-0479">Metal-binding</keyword>
<keyword id="KW-0645">Protease</keyword>
<keyword id="KW-0915">Sodium</keyword>
<keyword id="KW-0888">Threonine protease</keyword>
<reference key="1">
    <citation type="submission" date="2009-01" db="EMBL/GenBank/DDBJ databases">
        <title>Complete sequence of chromosome of Caldicellulosiruptor becscii DSM 6725.</title>
        <authorList>
            <person name="Lucas S."/>
            <person name="Copeland A."/>
            <person name="Lapidus A."/>
            <person name="Glavina del Rio T."/>
            <person name="Tice H."/>
            <person name="Bruce D."/>
            <person name="Goodwin L."/>
            <person name="Pitluck S."/>
            <person name="Sims D."/>
            <person name="Meincke L."/>
            <person name="Brettin T."/>
            <person name="Detter J.C."/>
            <person name="Han C."/>
            <person name="Larimer F."/>
            <person name="Land M."/>
            <person name="Hauser L."/>
            <person name="Kyrpides N."/>
            <person name="Ovchinnikova G."/>
            <person name="Kataeva I."/>
            <person name="Adams M.W.W."/>
        </authorList>
    </citation>
    <scope>NUCLEOTIDE SEQUENCE [LARGE SCALE GENOMIC DNA]</scope>
    <source>
        <strain>ATCC BAA-1888 / DSM 6725 / KCTC 15123 / Z-1320</strain>
    </source>
</reference>
<comment type="function">
    <text evidence="1">Protease subunit of a proteasome-like degradation complex believed to be a general protein degrading machinery.</text>
</comment>
<comment type="catalytic activity">
    <reaction evidence="1">
        <text>ATP-dependent cleavage of peptide bonds with broad specificity.</text>
        <dbReference type="EC" id="3.4.25.2"/>
    </reaction>
</comment>
<comment type="activity regulation">
    <text evidence="1">Allosterically activated by HslU binding.</text>
</comment>
<comment type="subunit">
    <text evidence="1">A double ring-shaped homohexamer of HslV is capped on each side by a ring-shaped HslU homohexamer. The assembly of the HslU/HslV complex is dependent on binding of ATP.</text>
</comment>
<comment type="subcellular location">
    <subcellularLocation>
        <location evidence="1">Cytoplasm</location>
    </subcellularLocation>
</comment>
<comment type="similarity">
    <text evidence="1">Belongs to the peptidase T1B family. HslV subfamily.</text>
</comment>
<name>HSLV_CALBD</name>